<organism>
    <name type="scientific">Bartonella tribocorum (strain CIP 105476 / IBS 506)</name>
    <dbReference type="NCBI Taxonomy" id="382640"/>
    <lineage>
        <taxon>Bacteria</taxon>
        <taxon>Pseudomonadati</taxon>
        <taxon>Pseudomonadota</taxon>
        <taxon>Alphaproteobacteria</taxon>
        <taxon>Hyphomicrobiales</taxon>
        <taxon>Bartonellaceae</taxon>
        <taxon>Bartonella</taxon>
    </lineage>
</organism>
<name>AROE_BART1</name>
<gene>
    <name evidence="1" type="primary">aroE</name>
    <name type="ordered locus">BT_0003</name>
</gene>
<feature type="chain" id="PRO_1000078113" description="Shikimate dehydrogenase (NADP(+))">
    <location>
        <begin position="1"/>
        <end position="290"/>
    </location>
</feature>
<feature type="active site" description="Proton acceptor" evidence="1">
    <location>
        <position position="75"/>
    </location>
</feature>
<feature type="binding site" evidence="1">
    <location>
        <begin position="24"/>
        <end position="26"/>
    </location>
    <ligand>
        <name>shikimate</name>
        <dbReference type="ChEBI" id="CHEBI:36208"/>
    </ligand>
</feature>
<feature type="binding site" evidence="1">
    <location>
        <position position="71"/>
    </location>
    <ligand>
        <name>shikimate</name>
        <dbReference type="ChEBI" id="CHEBI:36208"/>
    </ligand>
</feature>
<feature type="binding site" evidence="1">
    <location>
        <position position="96"/>
    </location>
    <ligand>
        <name>shikimate</name>
        <dbReference type="ChEBI" id="CHEBI:36208"/>
    </ligand>
</feature>
<feature type="binding site" evidence="1">
    <location>
        <position position="111"/>
    </location>
    <ligand>
        <name>shikimate</name>
        <dbReference type="ChEBI" id="CHEBI:36208"/>
    </ligand>
</feature>
<feature type="binding site" evidence="1">
    <location>
        <begin position="135"/>
        <end position="139"/>
    </location>
    <ligand>
        <name>NADP(+)</name>
        <dbReference type="ChEBI" id="CHEBI:58349"/>
    </ligand>
</feature>
<feature type="binding site" evidence="1">
    <location>
        <begin position="159"/>
        <end position="164"/>
    </location>
    <ligand>
        <name>NADP(+)</name>
        <dbReference type="ChEBI" id="CHEBI:58349"/>
    </ligand>
</feature>
<feature type="binding site" evidence="1">
    <location>
        <position position="228"/>
    </location>
    <ligand>
        <name>NADP(+)</name>
        <dbReference type="ChEBI" id="CHEBI:58349"/>
    </ligand>
</feature>
<feature type="binding site" evidence="1">
    <location>
        <position position="230"/>
    </location>
    <ligand>
        <name>shikimate</name>
        <dbReference type="ChEBI" id="CHEBI:36208"/>
    </ligand>
</feature>
<feature type="binding site" evidence="1">
    <location>
        <position position="251"/>
    </location>
    <ligand>
        <name>NADP(+)</name>
        <dbReference type="ChEBI" id="CHEBI:58349"/>
    </ligand>
</feature>
<sequence>MVDLTIEKTKYPRAFVVGSPIHHSKSPRIHNFWLKQYGLQGEYLAQEVTSEKFNHFITSFKKIGFCGGNVTLPHKQEAFRLADYKDKTATIIGAANTLWYEGDKLCATNSDTYGFSANLDDFASDWGGETALVFGAGGAARAILYALKERGFEQIYLVNRTKQRADNLAQHFGKNIKVYDWHKIHEILYQADLIVNTTSIGIKNPEEKSDSFFCDFHKAKKTALVTDIVYTPLITPFLQQAKSCGLKTVDGLGMLLHQAVIGFERWFGVRPQVTKALRTAILEDMSEERE</sequence>
<evidence type="ECO:0000255" key="1">
    <source>
        <dbReference type="HAMAP-Rule" id="MF_00222"/>
    </source>
</evidence>
<proteinExistence type="inferred from homology"/>
<reference key="1">
    <citation type="journal article" date="2007" name="Nat. Genet.">
        <title>Genomic analysis of Bartonella identifies type IV secretion systems as host adaptability factors.</title>
        <authorList>
            <person name="Saenz H.L."/>
            <person name="Engel P."/>
            <person name="Stoeckli M.C."/>
            <person name="Lanz C."/>
            <person name="Raddatz G."/>
            <person name="Vayssier-Taussat M."/>
            <person name="Birtles R."/>
            <person name="Schuster S.C."/>
            <person name="Dehio C."/>
        </authorList>
    </citation>
    <scope>NUCLEOTIDE SEQUENCE [LARGE SCALE GENOMIC DNA]</scope>
    <source>
        <strain>CIP 105476 / IBS 506</strain>
    </source>
</reference>
<keyword id="KW-0028">Amino-acid biosynthesis</keyword>
<keyword id="KW-0057">Aromatic amino acid biosynthesis</keyword>
<keyword id="KW-0521">NADP</keyword>
<keyword id="KW-0560">Oxidoreductase</keyword>
<accession>A9IKY5</accession>
<comment type="function">
    <text evidence="1">Involved in the biosynthesis of the chorismate, which leads to the biosynthesis of aromatic amino acids. Catalyzes the reversible NADPH linked reduction of 3-dehydroshikimate (DHSA) to yield shikimate (SA).</text>
</comment>
<comment type="catalytic activity">
    <reaction evidence="1">
        <text>shikimate + NADP(+) = 3-dehydroshikimate + NADPH + H(+)</text>
        <dbReference type="Rhea" id="RHEA:17737"/>
        <dbReference type="ChEBI" id="CHEBI:15378"/>
        <dbReference type="ChEBI" id="CHEBI:16630"/>
        <dbReference type="ChEBI" id="CHEBI:36208"/>
        <dbReference type="ChEBI" id="CHEBI:57783"/>
        <dbReference type="ChEBI" id="CHEBI:58349"/>
        <dbReference type="EC" id="1.1.1.25"/>
    </reaction>
</comment>
<comment type="pathway">
    <text evidence="1">Metabolic intermediate biosynthesis; chorismate biosynthesis; chorismate from D-erythrose 4-phosphate and phosphoenolpyruvate: step 4/7.</text>
</comment>
<comment type="subunit">
    <text evidence="1">Homodimer.</text>
</comment>
<comment type="similarity">
    <text evidence="1">Belongs to the shikimate dehydrogenase family.</text>
</comment>
<protein>
    <recommendedName>
        <fullName evidence="1">Shikimate dehydrogenase (NADP(+))</fullName>
        <shortName evidence="1">SDH</shortName>
        <ecNumber evidence="1">1.1.1.25</ecNumber>
    </recommendedName>
</protein>
<dbReference type="EC" id="1.1.1.25" evidence="1"/>
<dbReference type="EMBL" id="AM260525">
    <property type="protein sequence ID" value="CAK00508.1"/>
    <property type="molecule type" value="Genomic_DNA"/>
</dbReference>
<dbReference type="RefSeq" id="WP_012230253.1">
    <property type="nucleotide sequence ID" value="NC_010161.1"/>
</dbReference>
<dbReference type="SMR" id="A9IKY5"/>
<dbReference type="KEGG" id="btr:BT_0003"/>
<dbReference type="eggNOG" id="COG0169">
    <property type="taxonomic scope" value="Bacteria"/>
</dbReference>
<dbReference type="HOGENOM" id="CLU_044063_2_0_5"/>
<dbReference type="UniPathway" id="UPA00053">
    <property type="reaction ID" value="UER00087"/>
</dbReference>
<dbReference type="Proteomes" id="UP000001592">
    <property type="component" value="Chromosome"/>
</dbReference>
<dbReference type="GO" id="GO:0005829">
    <property type="term" value="C:cytosol"/>
    <property type="evidence" value="ECO:0007669"/>
    <property type="project" value="TreeGrafter"/>
</dbReference>
<dbReference type="GO" id="GO:0050661">
    <property type="term" value="F:NADP binding"/>
    <property type="evidence" value="ECO:0007669"/>
    <property type="project" value="InterPro"/>
</dbReference>
<dbReference type="GO" id="GO:0004764">
    <property type="term" value="F:shikimate 3-dehydrogenase (NADP+) activity"/>
    <property type="evidence" value="ECO:0007669"/>
    <property type="project" value="UniProtKB-UniRule"/>
</dbReference>
<dbReference type="GO" id="GO:0008652">
    <property type="term" value="P:amino acid biosynthetic process"/>
    <property type="evidence" value="ECO:0007669"/>
    <property type="project" value="UniProtKB-KW"/>
</dbReference>
<dbReference type="GO" id="GO:0009073">
    <property type="term" value="P:aromatic amino acid family biosynthetic process"/>
    <property type="evidence" value="ECO:0007669"/>
    <property type="project" value="UniProtKB-KW"/>
</dbReference>
<dbReference type="GO" id="GO:0009423">
    <property type="term" value="P:chorismate biosynthetic process"/>
    <property type="evidence" value="ECO:0007669"/>
    <property type="project" value="UniProtKB-UniRule"/>
</dbReference>
<dbReference type="GO" id="GO:0019632">
    <property type="term" value="P:shikimate metabolic process"/>
    <property type="evidence" value="ECO:0007669"/>
    <property type="project" value="InterPro"/>
</dbReference>
<dbReference type="CDD" id="cd01065">
    <property type="entry name" value="NAD_bind_Shikimate_DH"/>
    <property type="match status" value="1"/>
</dbReference>
<dbReference type="Gene3D" id="3.40.50.10860">
    <property type="entry name" value="Leucine Dehydrogenase, chain A, domain 1"/>
    <property type="match status" value="1"/>
</dbReference>
<dbReference type="Gene3D" id="3.40.50.720">
    <property type="entry name" value="NAD(P)-binding Rossmann-like Domain"/>
    <property type="match status" value="1"/>
</dbReference>
<dbReference type="HAMAP" id="MF_00222">
    <property type="entry name" value="Shikimate_DH_AroE"/>
    <property type="match status" value="1"/>
</dbReference>
<dbReference type="InterPro" id="IPR046346">
    <property type="entry name" value="Aminoacid_DH-like_N_sf"/>
</dbReference>
<dbReference type="InterPro" id="IPR036291">
    <property type="entry name" value="NAD(P)-bd_dom_sf"/>
</dbReference>
<dbReference type="InterPro" id="IPR041121">
    <property type="entry name" value="SDH_C"/>
</dbReference>
<dbReference type="InterPro" id="IPR011342">
    <property type="entry name" value="Shikimate_DH"/>
</dbReference>
<dbReference type="InterPro" id="IPR013708">
    <property type="entry name" value="Shikimate_DH-bd_N"/>
</dbReference>
<dbReference type="InterPro" id="IPR022893">
    <property type="entry name" value="Shikimate_DH_fam"/>
</dbReference>
<dbReference type="InterPro" id="IPR006151">
    <property type="entry name" value="Shikm_DH/Glu-tRNA_Rdtase"/>
</dbReference>
<dbReference type="NCBIfam" id="TIGR00507">
    <property type="entry name" value="aroE"/>
    <property type="match status" value="1"/>
</dbReference>
<dbReference type="NCBIfam" id="NF001312">
    <property type="entry name" value="PRK00258.1-4"/>
    <property type="match status" value="1"/>
</dbReference>
<dbReference type="PANTHER" id="PTHR21089:SF1">
    <property type="entry name" value="BIFUNCTIONAL 3-DEHYDROQUINATE DEHYDRATASE_SHIKIMATE DEHYDROGENASE, CHLOROPLASTIC"/>
    <property type="match status" value="1"/>
</dbReference>
<dbReference type="PANTHER" id="PTHR21089">
    <property type="entry name" value="SHIKIMATE DEHYDROGENASE"/>
    <property type="match status" value="1"/>
</dbReference>
<dbReference type="Pfam" id="PF18317">
    <property type="entry name" value="SDH_C"/>
    <property type="match status" value="1"/>
</dbReference>
<dbReference type="Pfam" id="PF01488">
    <property type="entry name" value="Shikimate_DH"/>
    <property type="match status" value="1"/>
</dbReference>
<dbReference type="Pfam" id="PF08501">
    <property type="entry name" value="Shikimate_dh_N"/>
    <property type="match status" value="1"/>
</dbReference>
<dbReference type="SUPFAM" id="SSF53223">
    <property type="entry name" value="Aminoacid dehydrogenase-like, N-terminal domain"/>
    <property type="match status" value="1"/>
</dbReference>
<dbReference type="SUPFAM" id="SSF51735">
    <property type="entry name" value="NAD(P)-binding Rossmann-fold domains"/>
    <property type="match status" value="1"/>
</dbReference>